<accession>B5FSY0</accession>
<name>RECA_SALDC</name>
<protein>
    <recommendedName>
        <fullName evidence="1">Protein RecA</fullName>
    </recommendedName>
    <alternativeName>
        <fullName evidence="1">Recombinase A</fullName>
    </alternativeName>
</protein>
<reference key="1">
    <citation type="journal article" date="2011" name="J. Bacteriol.">
        <title>Comparative genomics of 28 Salmonella enterica isolates: evidence for CRISPR-mediated adaptive sublineage evolution.</title>
        <authorList>
            <person name="Fricke W.F."/>
            <person name="Mammel M.K."/>
            <person name="McDermott P.F."/>
            <person name="Tartera C."/>
            <person name="White D.G."/>
            <person name="Leclerc J.E."/>
            <person name="Ravel J."/>
            <person name="Cebula T.A."/>
        </authorList>
    </citation>
    <scope>NUCLEOTIDE SEQUENCE [LARGE SCALE GENOMIC DNA]</scope>
    <source>
        <strain>CT_02021853</strain>
    </source>
</reference>
<organism>
    <name type="scientific">Salmonella dublin (strain CT_02021853)</name>
    <dbReference type="NCBI Taxonomy" id="439851"/>
    <lineage>
        <taxon>Bacteria</taxon>
        <taxon>Pseudomonadati</taxon>
        <taxon>Pseudomonadota</taxon>
        <taxon>Gammaproteobacteria</taxon>
        <taxon>Enterobacterales</taxon>
        <taxon>Enterobacteriaceae</taxon>
        <taxon>Salmonella</taxon>
    </lineage>
</organism>
<gene>
    <name evidence="1" type="primary">recA</name>
    <name type="ordered locus">SeD_A3138</name>
</gene>
<dbReference type="EMBL" id="CP001144">
    <property type="protein sequence ID" value="ACH73677.1"/>
    <property type="molecule type" value="Genomic_DNA"/>
</dbReference>
<dbReference type="RefSeq" id="WP_000963150.1">
    <property type="nucleotide sequence ID" value="NC_011205.1"/>
</dbReference>
<dbReference type="SMR" id="B5FSY0"/>
<dbReference type="KEGG" id="sed:SeD_A3138"/>
<dbReference type="HOGENOM" id="CLU_040469_3_2_6"/>
<dbReference type="Proteomes" id="UP000008322">
    <property type="component" value="Chromosome"/>
</dbReference>
<dbReference type="GO" id="GO:0005829">
    <property type="term" value="C:cytosol"/>
    <property type="evidence" value="ECO:0007669"/>
    <property type="project" value="TreeGrafter"/>
</dbReference>
<dbReference type="GO" id="GO:0005524">
    <property type="term" value="F:ATP binding"/>
    <property type="evidence" value="ECO:0007669"/>
    <property type="project" value="UniProtKB-UniRule"/>
</dbReference>
<dbReference type="GO" id="GO:0016887">
    <property type="term" value="F:ATP hydrolysis activity"/>
    <property type="evidence" value="ECO:0007669"/>
    <property type="project" value="InterPro"/>
</dbReference>
<dbReference type="GO" id="GO:0140664">
    <property type="term" value="F:ATP-dependent DNA damage sensor activity"/>
    <property type="evidence" value="ECO:0007669"/>
    <property type="project" value="InterPro"/>
</dbReference>
<dbReference type="GO" id="GO:0003684">
    <property type="term" value="F:damaged DNA binding"/>
    <property type="evidence" value="ECO:0007669"/>
    <property type="project" value="UniProtKB-UniRule"/>
</dbReference>
<dbReference type="GO" id="GO:0003697">
    <property type="term" value="F:single-stranded DNA binding"/>
    <property type="evidence" value="ECO:0007669"/>
    <property type="project" value="UniProtKB-UniRule"/>
</dbReference>
<dbReference type="GO" id="GO:0006310">
    <property type="term" value="P:DNA recombination"/>
    <property type="evidence" value="ECO:0007669"/>
    <property type="project" value="UniProtKB-UniRule"/>
</dbReference>
<dbReference type="GO" id="GO:0006281">
    <property type="term" value="P:DNA repair"/>
    <property type="evidence" value="ECO:0007669"/>
    <property type="project" value="UniProtKB-UniRule"/>
</dbReference>
<dbReference type="GO" id="GO:0009432">
    <property type="term" value="P:SOS response"/>
    <property type="evidence" value="ECO:0007669"/>
    <property type="project" value="UniProtKB-UniRule"/>
</dbReference>
<dbReference type="CDD" id="cd00983">
    <property type="entry name" value="RecA"/>
    <property type="match status" value="1"/>
</dbReference>
<dbReference type="FunFam" id="3.40.50.300:FF:000087">
    <property type="entry name" value="Recombinase RecA"/>
    <property type="match status" value="1"/>
</dbReference>
<dbReference type="Gene3D" id="3.40.50.300">
    <property type="entry name" value="P-loop containing nucleotide triphosphate hydrolases"/>
    <property type="match status" value="1"/>
</dbReference>
<dbReference type="HAMAP" id="MF_00268">
    <property type="entry name" value="RecA"/>
    <property type="match status" value="1"/>
</dbReference>
<dbReference type="InterPro" id="IPR003593">
    <property type="entry name" value="AAA+_ATPase"/>
</dbReference>
<dbReference type="InterPro" id="IPR013765">
    <property type="entry name" value="DNA_recomb/repair_RecA"/>
</dbReference>
<dbReference type="InterPro" id="IPR020584">
    <property type="entry name" value="DNA_recomb/repair_RecA_CS"/>
</dbReference>
<dbReference type="InterPro" id="IPR027417">
    <property type="entry name" value="P-loop_NTPase"/>
</dbReference>
<dbReference type="InterPro" id="IPR049261">
    <property type="entry name" value="RecA-like_C"/>
</dbReference>
<dbReference type="InterPro" id="IPR049428">
    <property type="entry name" value="RecA-like_N"/>
</dbReference>
<dbReference type="InterPro" id="IPR020588">
    <property type="entry name" value="RecA_ATP-bd"/>
</dbReference>
<dbReference type="InterPro" id="IPR023400">
    <property type="entry name" value="RecA_C_sf"/>
</dbReference>
<dbReference type="InterPro" id="IPR020587">
    <property type="entry name" value="RecA_monomer-monomer_interface"/>
</dbReference>
<dbReference type="NCBIfam" id="TIGR02012">
    <property type="entry name" value="tigrfam_recA"/>
    <property type="match status" value="1"/>
</dbReference>
<dbReference type="PANTHER" id="PTHR45900:SF1">
    <property type="entry name" value="MITOCHONDRIAL DNA REPAIR PROTEIN RECA HOMOLOG-RELATED"/>
    <property type="match status" value="1"/>
</dbReference>
<dbReference type="PANTHER" id="PTHR45900">
    <property type="entry name" value="RECA"/>
    <property type="match status" value="1"/>
</dbReference>
<dbReference type="Pfam" id="PF00154">
    <property type="entry name" value="RecA"/>
    <property type="match status" value="1"/>
</dbReference>
<dbReference type="Pfam" id="PF21096">
    <property type="entry name" value="RecA_C"/>
    <property type="match status" value="1"/>
</dbReference>
<dbReference type="PRINTS" id="PR00142">
    <property type="entry name" value="RECA"/>
</dbReference>
<dbReference type="SMART" id="SM00382">
    <property type="entry name" value="AAA"/>
    <property type="match status" value="1"/>
</dbReference>
<dbReference type="SUPFAM" id="SSF52540">
    <property type="entry name" value="P-loop containing nucleoside triphosphate hydrolases"/>
    <property type="match status" value="1"/>
</dbReference>
<dbReference type="SUPFAM" id="SSF54752">
    <property type="entry name" value="RecA protein, C-terminal domain"/>
    <property type="match status" value="1"/>
</dbReference>
<dbReference type="PROSITE" id="PS00321">
    <property type="entry name" value="RECA_1"/>
    <property type="match status" value="1"/>
</dbReference>
<dbReference type="PROSITE" id="PS50162">
    <property type="entry name" value="RECA_2"/>
    <property type="match status" value="1"/>
</dbReference>
<dbReference type="PROSITE" id="PS50163">
    <property type="entry name" value="RECA_3"/>
    <property type="match status" value="1"/>
</dbReference>
<keyword id="KW-0067">ATP-binding</keyword>
<keyword id="KW-0963">Cytoplasm</keyword>
<keyword id="KW-0227">DNA damage</keyword>
<keyword id="KW-0233">DNA recombination</keyword>
<keyword id="KW-0234">DNA repair</keyword>
<keyword id="KW-0238">DNA-binding</keyword>
<keyword id="KW-0547">Nucleotide-binding</keyword>
<keyword id="KW-0742">SOS response</keyword>
<evidence type="ECO:0000255" key="1">
    <source>
        <dbReference type="HAMAP-Rule" id="MF_00268"/>
    </source>
</evidence>
<feature type="chain" id="PRO_1000114361" description="Protein RecA">
    <location>
        <begin position="1"/>
        <end position="353"/>
    </location>
</feature>
<feature type="binding site" evidence="1">
    <location>
        <begin position="67"/>
        <end position="74"/>
    </location>
    <ligand>
        <name>ATP</name>
        <dbReference type="ChEBI" id="CHEBI:30616"/>
    </ligand>
</feature>
<comment type="function">
    <text evidence="1">Can catalyze the hydrolysis of ATP in the presence of single-stranded DNA, the ATP-dependent uptake of single-stranded DNA by duplex DNA, and the ATP-dependent hybridization of homologous single-stranded DNAs. It interacts with LexA causing its activation and leading to its autocatalytic cleavage.</text>
</comment>
<comment type="subcellular location">
    <subcellularLocation>
        <location evidence="1">Cytoplasm</location>
    </subcellularLocation>
</comment>
<comment type="similarity">
    <text evidence="1">Belongs to the RecA family.</text>
</comment>
<proteinExistence type="inferred from homology"/>
<sequence>MAIDENKQKALAAALGQIEKQFGKGSIMRLGEDRSMDVETISTGSLSLDIALGAGGLPMGRIVEIYGPESSGKTTLTLQVIAAAQREGKTCAFIDAEHALDPVYARKLGVDIDNLLCSQPDTGEQALEICDALARSGAVDVIVVDSVAALTPKAEIEGEIGDSHMGLAARMMSQAMRKLAGNLKQSNTLLIFINQIRMKIGVMFGNPETTTGGNALKFYASVRLDIRRIGAVKEGDNVVGSETRVKVVKNKIAAPFKQAEFQILYGEGINFYGELVDLGVKEKLIEKAGAWYSYNGEKIGQGKANATTWLKENPATAKEIEKRVRELLLSNQNATPDFAVDDSEGVAETNEDF</sequence>